<protein>
    <recommendedName>
        <fullName evidence="1">Probable septum site-determining protein MinC</fullName>
    </recommendedName>
</protein>
<gene>
    <name evidence="1" type="primary">minC</name>
    <name type="ordered locus">SBO_1894</name>
</gene>
<sequence>MSNTPIELKGSSFTLSVVHLHEAEPKVIHQALEDKIAQAPAFLKHAPVVLNVSALEDPVNWSAMHKAVSATGLRVIGVSGCKDAQLKAEIEKMGLPILTEGKEKAPRPAPAPQAPAQNTTPVTKTRLIDTPVRSGQRIYAPQCDLIVTSHVSAGAELIADGNIHVYGMMRGRALAGASGDRETQIFCTNLMAELVSIAGEYWLSDQIPAEFYGKAARLQLVENALTVQPLN</sequence>
<keyword id="KW-0131">Cell cycle</keyword>
<keyword id="KW-0132">Cell division</keyword>
<keyword id="KW-0717">Septation</keyword>
<organism>
    <name type="scientific">Shigella boydii serotype 4 (strain Sb227)</name>
    <dbReference type="NCBI Taxonomy" id="300268"/>
    <lineage>
        <taxon>Bacteria</taxon>
        <taxon>Pseudomonadati</taxon>
        <taxon>Pseudomonadota</taxon>
        <taxon>Gammaproteobacteria</taxon>
        <taxon>Enterobacterales</taxon>
        <taxon>Enterobacteriaceae</taxon>
        <taxon>Shigella</taxon>
    </lineage>
</organism>
<name>MINC_SHIBS</name>
<comment type="function">
    <text evidence="1">Cell division inhibitor that blocks the formation of polar Z ring septums. Rapidly oscillates between the poles of the cell to destabilize FtsZ filaments that have formed before they mature into polar Z rings. Prevents FtsZ polymerization.</text>
</comment>
<comment type="subunit">
    <text evidence="1">Interacts with MinD and FtsZ.</text>
</comment>
<comment type="similarity">
    <text evidence="1">Belongs to the MinC family.</text>
</comment>
<dbReference type="EMBL" id="CP000036">
    <property type="protein sequence ID" value="ABB66487.1"/>
    <property type="molecule type" value="Genomic_DNA"/>
</dbReference>
<dbReference type="RefSeq" id="WP_000072536.1">
    <property type="nucleotide sequence ID" value="NC_007613.1"/>
</dbReference>
<dbReference type="SMR" id="Q31ZM1"/>
<dbReference type="GeneID" id="93776258"/>
<dbReference type="KEGG" id="sbo:SBO_1894"/>
<dbReference type="HOGENOM" id="CLU_067812_0_1_6"/>
<dbReference type="Proteomes" id="UP000007067">
    <property type="component" value="Chromosome"/>
</dbReference>
<dbReference type="GO" id="GO:0000902">
    <property type="term" value="P:cell morphogenesis"/>
    <property type="evidence" value="ECO:0007669"/>
    <property type="project" value="InterPro"/>
</dbReference>
<dbReference type="GO" id="GO:0000917">
    <property type="term" value="P:division septum assembly"/>
    <property type="evidence" value="ECO:0007669"/>
    <property type="project" value="UniProtKB-KW"/>
</dbReference>
<dbReference type="GO" id="GO:0051302">
    <property type="term" value="P:regulation of cell division"/>
    <property type="evidence" value="ECO:0007669"/>
    <property type="project" value="InterPro"/>
</dbReference>
<dbReference type="GO" id="GO:1901891">
    <property type="term" value="P:regulation of cell septum assembly"/>
    <property type="evidence" value="ECO:0007669"/>
    <property type="project" value="InterPro"/>
</dbReference>
<dbReference type="FunFam" id="2.160.20.70:FF:000002">
    <property type="entry name" value="Probable septum site-determining protein MinC"/>
    <property type="match status" value="1"/>
</dbReference>
<dbReference type="Gene3D" id="2.160.20.70">
    <property type="match status" value="1"/>
</dbReference>
<dbReference type="Gene3D" id="3.30.70.260">
    <property type="match status" value="1"/>
</dbReference>
<dbReference type="HAMAP" id="MF_00267">
    <property type="entry name" value="MinC"/>
    <property type="match status" value="1"/>
</dbReference>
<dbReference type="InterPro" id="IPR016098">
    <property type="entry name" value="CAP/MinC_C"/>
</dbReference>
<dbReference type="InterPro" id="IPR013033">
    <property type="entry name" value="MinC"/>
</dbReference>
<dbReference type="InterPro" id="IPR036145">
    <property type="entry name" value="MinC_C_sf"/>
</dbReference>
<dbReference type="InterPro" id="IPR007874">
    <property type="entry name" value="MinC_N"/>
</dbReference>
<dbReference type="InterPro" id="IPR005526">
    <property type="entry name" value="Septum_form_inhib_MinC_C"/>
</dbReference>
<dbReference type="NCBIfam" id="TIGR01222">
    <property type="entry name" value="minC"/>
    <property type="match status" value="1"/>
</dbReference>
<dbReference type="PANTHER" id="PTHR34108">
    <property type="entry name" value="SEPTUM SITE-DETERMINING PROTEIN MINC"/>
    <property type="match status" value="1"/>
</dbReference>
<dbReference type="PANTHER" id="PTHR34108:SF1">
    <property type="entry name" value="SEPTUM SITE-DETERMINING PROTEIN MINC"/>
    <property type="match status" value="1"/>
</dbReference>
<dbReference type="Pfam" id="PF03775">
    <property type="entry name" value="MinC_C"/>
    <property type="match status" value="1"/>
</dbReference>
<dbReference type="Pfam" id="PF05209">
    <property type="entry name" value="MinC_N"/>
    <property type="match status" value="1"/>
</dbReference>
<dbReference type="SUPFAM" id="SSF63848">
    <property type="entry name" value="Cell-division inhibitor MinC, C-terminal domain"/>
    <property type="match status" value="1"/>
</dbReference>
<evidence type="ECO:0000255" key="1">
    <source>
        <dbReference type="HAMAP-Rule" id="MF_00267"/>
    </source>
</evidence>
<evidence type="ECO:0000256" key="2">
    <source>
        <dbReference type="SAM" id="MobiDB-lite"/>
    </source>
</evidence>
<feature type="chain" id="PRO_1000047865" description="Probable septum site-determining protein MinC">
    <location>
        <begin position="1"/>
        <end position="231"/>
    </location>
</feature>
<feature type="region of interest" description="Disordered" evidence="2">
    <location>
        <begin position="102"/>
        <end position="125"/>
    </location>
</feature>
<proteinExistence type="inferred from homology"/>
<accession>Q31ZM1</accession>
<reference key="1">
    <citation type="journal article" date="2005" name="Nucleic Acids Res.">
        <title>Genome dynamics and diversity of Shigella species, the etiologic agents of bacillary dysentery.</title>
        <authorList>
            <person name="Yang F."/>
            <person name="Yang J."/>
            <person name="Zhang X."/>
            <person name="Chen L."/>
            <person name="Jiang Y."/>
            <person name="Yan Y."/>
            <person name="Tang X."/>
            <person name="Wang J."/>
            <person name="Xiong Z."/>
            <person name="Dong J."/>
            <person name="Xue Y."/>
            <person name="Zhu Y."/>
            <person name="Xu X."/>
            <person name="Sun L."/>
            <person name="Chen S."/>
            <person name="Nie H."/>
            <person name="Peng J."/>
            <person name="Xu J."/>
            <person name="Wang Y."/>
            <person name="Yuan Z."/>
            <person name="Wen Y."/>
            <person name="Yao Z."/>
            <person name="Shen Y."/>
            <person name="Qiang B."/>
            <person name="Hou Y."/>
            <person name="Yu J."/>
            <person name="Jin Q."/>
        </authorList>
    </citation>
    <scope>NUCLEOTIDE SEQUENCE [LARGE SCALE GENOMIC DNA]</scope>
    <source>
        <strain>Sb227</strain>
    </source>
</reference>